<dbReference type="EC" id="4.2.1.33" evidence="1"/>
<dbReference type="EMBL" id="CP000680">
    <property type="protein sequence ID" value="ABP85478.1"/>
    <property type="molecule type" value="Genomic_DNA"/>
</dbReference>
<dbReference type="SMR" id="A4XVW2"/>
<dbReference type="STRING" id="399739.Pmen_2723"/>
<dbReference type="KEGG" id="pmy:Pmen_2723"/>
<dbReference type="PATRIC" id="fig|399739.8.peg.2753"/>
<dbReference type="eggNOG" id="COG0065">
    <property type="taxonomic scope" value="Bacteria"/>
</dbReference>
<dbReference type="HOGENOM" id="CLU_006714_3_4_6"/>
<dbReference type="OrthoDB" id="9802769at2"/>
<dbReference type="UniPathway" id="UPA00048">
    <property type="reaction ID" value="UER00071"/>
</dbReference>
<dbReference type="GO" id="GO:0003861">
    <property type="term" value="F:3-isopropylmalate dehydratase activity"/>
    <property type="evidence" value="ECO:0007669"/>
    <property type="project" value="UniProtKB-UniRule"/>
</dbReference>
<dbReference type="GO" id="GO:0051539">
    <property type="term" value="F:4 iron, 4 sulfur cluster binding"/>
    <property type="evidence" value="ECO:0007669"/>
    <property type="project" value="UniProtKB-KW"/>
</dbReference>
<dbReference type="GO" id="GO:0046872">
    <property type="term" value="F:metal ion binding"/>
    <property type="evidence" value="ECO:0007669"/>
    <property type="project" value="UniProtKB-KW"/>
</dbReference>
<dbReference type="GO" id="GO:0009098">
    <property type="term" value="P:L-leucine biosynthetic process"/>
    <property type="evidence" value="ECO:0007669"/>
    <property type="project" value="UniProtKB-UniRule"/>
</dbReference>
<dbReference type="CDD" id="cd01583">
    <property type="entry name" value="IPMI"/>
    <property type="match status" value="1"/>
</dbReference>
<dbReference type="FunFam" id="3.30.499.10:FF:000007">
    <property type="entry name" value="3-isopropylmalate dehydratase large subunit"/>
    <property type="match status" value="1"/>
</dbReference>
<dbReference type="Gene3D" id="3.30.499.10">
    <property type="entry name" value="Aconitase, domain 3"/>
    <property type="match status" value="2"/>
</dbReference>
<dbReference type="HAMAP" id="MF_01026">
    <property type="entry name" value="LeuC_type1"/>
    <property type="match status" value="1"/>
</dbReference>
<dbReference type="InterPro" id="IPR004430">
    <property type="entry name" value="3-IsopropMal_deHydase_lsu"/>
</dbReference>
<dbReference type="InterPro" id="IPR015931">
    <property type="entry name" value="Acnase/IPM_dHydase_lsu_aba_1/3"/>
</dbReference>
<dbReference type="InterPro" id="IPR001030">
    <property type="entry name" value="Acoase/IPM_deHydtase_lsu_aba"/>
</dbReference>
<dbReference type="InterPro" id="IPR018136">
    <property type="entry name" value="Aconitase_4Fe-4S_BS"/>
</dbReference>
<dbReference type="InterPro" id="IPR036008">
    <property type="entry name" value="Aconitase_4Fe-4S_dom"/>
</dbReference>
<dbReference type="InterPro" id="IPR050067">
    <property type="entry name" value="IPM_dehydratase_rel_enz"/>
</dbReference>
<dbReference type="InterPro" id="IPR033941">
    <property type="entry name" value="IPMI_cat"/>
</dbReference>
<dbReference type="NCBIfam" id="TIGR00170">
    <property type="entry name" value="leuC"/>
    <property type="match status" value="1"/>
</dbReference>
<dbReference type="NCBIfam" id="NF004016">
    <property type="entry name" value="PRK05478.1"/>
    <property type="match status" value="1"/>
</dbReference>
<dbReference type="NCBIfam" id="NF009116">
    <property type="entry name" value="PRK12466.1"/>
    <property type="match status" value="1"/>
</dbReference>
<dbReference type="PANTHER" id="PTHR43822:SF9">
    <property type="entry name" value="3-ISOPROPYLMALATE DEHYDRATASE"/>
    <property type="match status" value="1"/>
</dbReference>
<dbReference type="PANTHER" id="PTHR43822">
    <property type="entry name" value="HOMOACONITASE, MITOCHONDRIAL-RELATED"/>
    <property type="match status" value="1"/>
</dbReference>
<dbReference type="Pfam" id="PF00330">
    <property type="entry name" value="Aconitase"/>
    <property type="match status" value="1"/>
</dbReference>
<dbReference type="PRINTS" id="PR00415">
    <property type="entry name" value="ACONITASE"/>
</dbReference>
<dbReference type="SUPFAM" id="SSF53732">
    <property type="entry name" value="Aconitase iron-sulfur domain"/>
    <property type="match status" value="1"/>
</dbReference>
<dbReference type="PROSITE" id="PS00450">
    <property type="entry name" value="ACONITASE_1"/>
    <property type="match status" value="1"/>
</dbReference>
<dbReference type="PROSITE" id="PS01244">
    <property type="entry name" value="ACONITASE_2"/>
    <property type="match status" value="1"/>
</dbReference>
<accession>A4XVW2</accession>
<gene>
    <name evidence="1" type="primary">leuC</name>
    <name type="ordered locus">Pmen_2723</name>
</gene>
<comment type="function">
    <text evidence="1">Catalyzes the isomerization between 2-isopropylmalate and 3-isopropylmalate, via the formation of 2-isopropylmaleate.</text>
</comment>
<comment type="catalytic activity">
    <reaction evidence="1">
        <text>(2R,3S)-3-isopropylmalate = (2S)-2-isopropylmalate</text>
        <dbReference type="Rhea" id="RHEA:32287"/>
        <dbReference type="ChEBI" id="CHEBI:1178"/>
        <dbReference type="ChEBI" id="CHEBI:35121"/>
        <dbReference type="EC" id="4.2.1.33"/>
    </reaction>
</comment>
<comment type="cofactor">
    <cofactor evidence="1">
        <name>[4Fe-4S] cluster</name>
        <dbReference type="ChEBI" id="CHEBI:49883"/>
    </cofactor>
    <text evidence="1">Binds 1 [4Fe-4S] cluster per subunit.</text>
</comment>
<comment type="pathway">
    <text evidence="1">Amino-acid biosynthesis; L-leucine biosynthesis; L-leucine from 3-methyl-2-oxobutanoate: step 2/4.</text>
</comment>
<comment type="subunit">
    <text evidence="1">Heterodimer of LeuC and LeuD.</text>
</comment>
<comment type="similarity">
    <text evidence="1">Belongs to the aconitase/IPM isomerase family. LeuC type 1 subfamily.</text>
</comment>
<feature type="chain" id="PRO_1000063593" description="3-isopropylmalate dehydratase large subunit">
    <location>
        <begin position="1"/>
        <end position="475"/>
    </location>
</feature>
<feature type="binding site" evidence="1">
    <location>
        <position position="353"/>
    </location>
    <ligand>
        <name>[4Fe-4S] cluster</name>
        <dbReference type="ChEBI" id="CHEBI:49883"/>
    </ligand>
</feature>
<feature type="binding site" evidence="1">
    <location>
        <position position="414"/>
    </location>
    <ligand>
        <name>[4Fe-4S] cluster</name>
        <dbReference type="ChEBI" id="CHEBI:49883"/>
    </ligand>
</feature>
<feature type="binding site" evidence="1">
    <location>
        <position position="417"/>
    </location>
    <ligand>
        <name>[4Fe-4S] cluster</name>
        <dbReference type="ChEBI" id="CHEBI:49883"/>
    </ligand>
</feature>
<proteinExistence type="inferred from homology"/>
<sequence>MTGKTLYDKLWEMHEVKRRDDGSSLIYIDRHILHEVTSPQAFEGLRLAGRKPWRIDANIATPDHNVPTTKAERQGGLEAIADEVSRIQVQTLDENCDDFGILEFKMNDVRQGIVHVVGPEQGATLPGMTVVCGDSHTSTHGAFGALAHGIGTSEVEHVLATQCLVAKKMKNMQVRVEGKLPFGVTAKDIVLAVIGKIGTAGGNGHALEFAGSAIRDLSLEGRMTICNMSIEAGARVGLVAVDEKTIAYVKDRPFAPKGSDWDKAVTQWQNLVSDADAVFDTVVELKAEDIKPQVSWGTSPEMVLAVDQNVPDPAVETDPVKKDSITRALKYMGLSANQPITDIQLDRVFIGSCTNSRIEDLRAAAEVAKGRKVASTVKQALVVPGSGLVKAQAEAEGLDKIFIEAGFEWREPGCSMCLAMNPDKLGSGEHCASTSNRNFEGRQGAGGRTHLVSPAMAAAAAVTGRFIDVRELIQA</sequence>
<evidence type="ECO:0000255" key="1">
    <source>
        <dbReference type="HAMAP-Rule" id="MF_01026"/>
    </source>
</evidence>
<reference key="1">
    <citation type="submission" date="2007-04" db="EMBL/GenBank/DDBJ databases">
        <title>Complete sequence of Pseudomonas mendocina ymp.</title>
        <authorList>
            <consortium name="US DOE Joint Genome Institute"/>
            <person name="Copeland A."/>
            <person name="Lucas S."/>
            <person name="Lapidus A."/>
            <person name="Barry K."/>
            <person name="Glavina del Rio T."/>
            <person name="Dalin E."/>
            <person name="Tice H."/>
            <person name="Pitluck S."/>
            <person name="Kiss H."/>
            <person name="Brettin T."/>
            <person name="Detter J.C."/>
            <person name="Bruce D."/>
            <person name="Han C."/>
            <person name="Schmutz J."/>
            <person name="Larimer F."/>
            <person name="Land M."/>
            <person name="Hauser L."/>
            <person name="Kyrpides N."/>
            <person name="Mikhailova N."/>
            <person name="Hersman L."/>
            <person name="Dubois J."/>
            <person name="Maurice P."/>
            <person name="Richardson P."/>
        </authorList>
    </citation>
    <scope>NUCLEOTIDE SEQUENCE [LARGE SCALE GENOMIC DNA]</scope>
    <source>
        <strain>ymp</strain>
    </source>
</reference>
<organism>
    <name type="scientific">Ectopseudomonas mendocina (strain ymp)</name>
    <name type="common">Pseudomonas mendocina</name>
    <dbReference type="NCBI Taxonomy" id="399739"/>
    <lineage>
        <taxon>Bacteria</taxon>
        <taxon>Pseudomonadati</taxon>
        <taxon>Pseudomonadota</taxon>
        <taxon>Gammaproteobacteria</taxon>
        <taxon>Pseudomonadales</taxon>
        <taxon>Pseudomonadaceae</taxon>
        <taxon>Ectopseudomonas</taxon>
    </lineage>
</organism>
<name>LEUC_ECTM1</name>
<protein>
    <recommendedName>
        <fullName evidence="1">3-isopropylmalate dehydratase large subunit</fullName>
        <ecNumber evidence="1">4.2.1.33</ecNumber>
    </recommendedName>
    <alternativeName>
        <fullName evidence="1">Alpha-IPM isomerase</fullName>
        <shortName evidence="1">IPMI</shortName>
    </alternativeName>
    <alternativeName>
        <fullName evidence="1">Isopropylmalate isomerase</fullName>
    </alternativeName>
</protein>
<keyword id="KW-0004">4Fe-4S</keyword>
<keyword id="KW-0028">Amino-acid biosynthesis</keyword>
<keyword id="KW-0100">Branched-chain amino acid biosynthesis</keyword>
<keyword id="KW-0408">Iron</keyword>
<keyword id="KW-0411">Iron-sulfur</keyword>
<keyword id="KW-0432">Leucine biosynthesis</keyword>
<keyword id="KW-0456">Lyase</keyword>
<keyword id="KW-0479">Metal-binding</keyword>